<proteinExistence type="inferred from homology"/>
<protein>
    <recommendedName>
        <fullName evidence="1">GMP synthase [glutamine-hydrolyzing]</fullName>
        <ecNumber evidence="1">6.3.5.2</ecNumber>
    </recommendedName>
    <alternativeName>
        <fullName evidence="1">GMP synthetase</fullName>
    </alternativeName>
    <alternativeName>
        <fullName evidence="1">Glutamine amidotransferase</fullName>
    </alternativeName>
</protein>
<dbReference type="EC" id="6.3.5.2" evidence="1"/>
<dbReference type="EMBL" id="CP000114">
    <property type="protein sequence ID" value="ABA45900.1"/>
    <property type="molecule type" value="Genomic_DNA"/>
</dbReference>
<dbReference type="RefSeq" id="WP_000129872.1">
    <property type="nucleotide sequence ID" value="NC_007432.1"/>
</dbReference>
<dbReference type="SMR" id="Q3K1C0"/>
<dbReference type="MEROPS" id="C26.957"/>
<dbReference type="KEGG" id="sak:SAK_1062"/>
<dbReference type="HOGENOM" id="CLU_014340_0_5_9"/>
<dbReference type="UniPathway" id="UPA00189">
    <property type="reaction ID" value="UER00296"/>
</dbReference>
<dbReference type="GO" id="GO:0005829">
    <property type="term" value="C:cytosol"/>
    <property type="evidence" value="ECO:0007669"/>
    <property type="project" value="TreeGrafter"/>
</dbReference>
<dbReference type="GO" id="GO:0005524">
    <property type="term" value="F:ATP binding"/>
    <property type="evidence" value="ECO:0007669"/>
    <property type="project" value="UniProtKB-UniRule"/>
</dbReference>
<dbReference type="GO" id="GO:0003921">
    <property type="term" value="F:GMP synthase activity"/>
    <property type="evidence" value="ECO:0007669"/>
    <property type="project" value="InterPro"/>
</dbReference>
<dbReference type="CDD" id="cd01742">
    <property type="entry name" value="GATase1_GMP_Synthase"/>
    <property type="match status" value="1"/>
</dbReference>
<dbReference type="CDD" id="cd01997">
    <property type="entry name" value="GMP_synthase_C"/>
    <property type="match status" value="1"/>
</dbReference>
<dbReference type="FunFam" id="3.30.300.10:FF:000002">
    <property type="entry name" value="GMP synthase [glutamine-hydrolyzing]"/>
    <property type="match status" value="1"/>
</dbReference>
<dbReference type="FunFam" id="3.40.50.620:FF:000001">
    <property type="entry name" value="GMP synthase [glutamine-hydrolyzing]"/>
    <property type="match status" value="1"/>
</dbReference>
<dbReference type="FunFam" id="3.40.50.880:FF:000001">
    <property type="entry name" value="GMP synthase [glutamine-hydrolyzing]"/>
    <property type="match status" value="1"/>
</dbReference>
<dbReference type="Gene3D" id="3.30.300.10">
    <property type="match status" value="1"/>
</dbReference>
<dbReference type="Gene3D" id="3.40.50.880">
    <property type="match status" value="1"/>
</dbReference>
<dbReference type="Gene3D" id="3.40.50.620">
    <property type="entry name" value="HUPs"/>
    <property type="match status" value="1"/>
</dbReference>
<dbReference type="HAMAP" id="MF_00344">
    <property type="entry name" value="GMP_synthase"/>
    <property type="match status" value="1"/>
</dbReference>
<dbReference type="InterPro" id="IPR029062">
    <property type="entry name" value="Class_I_gatase-like"/>
</dbReference>
<dbReference type="InterPro" id="IPR017926">
    <property type="entry name" value="GATASE"/>
</dbReference>
<dbReference type="InterPro" id="IPR001674">
    <property type="entry name" value="GMP_synth_C"/>
</dbReference>
<dbReference type="InterPro" id="IPR004739">
    <property type="entry name" value="GMP_synth_GATase"/>
</dbReference>
<dbReference type="InterPro" id="IPR022955">
    <property type="entry name" value="GMP_synthase"/>
</dbReference>
<dbReference type="InterPro" id="IPR025777">
    <property type="entry name" value="GMPS_ATP_PPase_dom"/>
</dbReference>
<dbReference type="InterPro" id="IPR022310">
    <property type="entry name" value="NAD/GMP_synthase"/>
</dbReference>
<dbReference type="InterPro" id="IPR014729">
    <property type="entry name" value="Rossmann-like_a/b/a_fold"/>
</dbReference>
<dbReference type="NCBIfam" id="TIGR00884">
    <property type="entry name" value="guaA_Cterm"/>
    <property type="match status" value="1"/>
</dbReference>
<dbReference type="NCBIfam" id="TIGR00888">
    <property type="entry name" value="guaA_Nterm"/>
    <property type="match status" value="1"/>
</dbReference>
<dbReference type="NCBIfam" id="NF000848">
    <property type="entry name" value="PRK00074.1"/>
    <property type="match status" value="1"/>
</dbReference>
<dbReference type="PANTHER" id="PTHR11922:SF2">
    <property type="entry name" value="GMP SYNTHASE [GLUTAMINE-HYDROLYZING]"/>
    <property type="match status" value="1"/>
</dbReference>
<dbReference type="PANTHER" id="PTHR11922">
    <property type="entry name" value="GMP SYNTHASE-RELATED"/>
    <property type="match status" value="1"/>
</dbReference>
<dbReference type="Pfam" id="PF00117">
    <property type="entry name" value="GATase"/>
    <property type="match status" value="1"/>
</dbReference>
<dbReference type="Pfam" id="PF00958">
    <property type="entry name" value="GMP_synt_C"/>
    <property type="match status" value="1"/>
</dbReference>
<dbReference type="Pfam" id="PF02540">
    <property type="entry name" value="NAD_synthase"/>
    <property type="match status" value="1"/>
</dbReference>
<dbReference type="PRINTS" id="PR00097">
    <property type="entry name" value="ANTSNTHASEII"/>
</dbReference>
<dbReference type="PRINTS" id="PR00099">
    <property type="entry name" value="CPSGATASE"/>
</dbReference>
<dbReference type="PRINTS" id="PR00096">
    <property type="entry name" value="GATASE"/>
</dbReference>
<dbReference type="SUPFAM" id="SSF52402">
    <property type="entry name" value="Adenine nucleotide alpha hydrolases-like"/>
    <property type="match status" value="1"/>
</dbReference>
<dbReference type="SUPFAM" id="SSF52317">
    <property type="entry name" value="Class I glutamine amidotransferase-like"/>
    <property type="match status" value="1"/>
</dbReference>
<dbReference type="SUPFAM" id="SSF54810">
    <property type="entry name" value="GMP synthetase C-terminal dimerisation domain"/>
    <property type="match status" value="1"/>
</dbReference>
<dbReference type="PROSITE" id="PS51273">
    <property type="entry name" value="GATASE_TYPE_1"/>
    <property type="match status" value="1"/>
</dbReference>
<dbReference type="PROSITE" id="PS51553">
    <property type="entry name" value="GMPS_ATP_PPASE"/>
    <property type="match status" value="1"/>
</dbReference>
<comment type="function">
    <text evidence="1">Catalyzes the synthesis of GMP from XMP.</text>
</comment>
<comment type="catalytic activity">
    <reaction evidence="1">
        <text>XMP + L-glutamine + ATP + H2O = GMP + L-glutamate + AMP + diphosphate + 2 H(+)</text>
        <dbReference type="Rhea" id="RHEA:11680"/>
        <dbReference type="ChEBI" id="CHEBI:15377"/>
        <dbReference type="ChEBI" id="CHEBI:15378"/>
        <dbReference type="ChEBI" id="CHEBI:29985"/>
        <dbReference type="ChEBI" id="CHEBI:30616"/>
        <dbReference type="ChEBI" id="CHEBI:33019"/>
        <dbReference type="ChEBI" id="CHEBI:57464"/>
        <dbReference type="ChEBI" id="CHEBI:58115"/>
        <dbReference type="ChEBI" id="CHEBI:58359"/>
        <dbReference type="ChEBI" id="CHEBI:456215"/>
        <dbReference type="EC" id="6.3.5.2"/>
    </reaction>
</comment>
<comment type="pathway">
    <text evidence="1">Purine metabolism; GMP biosynthesis; GMP from XMP (L-Gln route): step 1/1.</text>
</comment>
<comment type="subunit">
    <text evidence="1">Homodimer.</text>
</comment>
<name>GUAA_STRA1</name>
<sequence>MTDISILNDIQKIIVLDYGSQYNQLIARRIREFGVFSELKSHKITADEIRDINPIGIVLSGGPNSVYADGAFGIDEEIFELGIPILGICYGMQLITHKLGGKVLPAGEAGHREYGQSALRLRSESALFAGTPQEQLVLMSHGDAVTEIPEGFHLVGDSVDCPFAAMENTEKQFYGIQFHPEVRHSVYGNDILKNFAVNICGARGDWSMDNFIDMEIAKIRETVGDRKVLLGLSGGVDSSVVGVLLQRAIGDQLTCIFVDHGLLRKNEGDQVMDMLGGKFGLNIIRVDASKRFLDLLSGVEDPERKRKIIGNEFVYVFDDEASKLKGVDFLAQGTLYTDIIESGTETAQTIKSHHNVGGLPEDMQFELIEPLNTLFKDEVRALGTALGMPDEVVWRQPFPGPGLAIRVMGEITEEKLETVRESDAILREEIAKAGLDRDVWQYFTVNTGVRSVGVMGDGRTYDYTIAIRAITSIDGMTADFAQLPWDVLKKISTRIVNEVDHVNRIVYDITSKPPATVEWE</sequence>
<reference key="1">
    <citation type="journal article" date="2005" name="Proc. Natl. Acad. Sci. U.S.A.">
        <title>Genome analysis of multiple pathogenic isolates of Streptococcus agalactiae: implications for the microbial 'pan-genome'.</title>
        <authorList>
            <person name="Tettelin H."/>
            <person name="Masignani V."/>
            <person name="Cieslewicz M.J."/>
            <person name="Donati C."/>
            <person name="Medini D."/>
            <person name="Ward N.L."/>
            <person name="Angiuoli S.V."/>
            <person name="Crabtree J."/>
            <person name="Jones A.L."/>
            <person name="Durkin A.S."/>
            <person name="DeBoy R.T."/>
            <person name="Davidsen T.M."/>
            <person name="Mora M."/>
            <person name="Scarselli M."/>
            <person name="Margarit y Ros I."/>
            <person name="Peterson J.D."/>
            <person name="Hauser C.R."/>
            <person name="Sundaram J.P."/>
            <person name="Nelson W.C."/>
            <person name="Madupu R."/>
            <person name="Brinkac L.M."/>
            <person name="Dodson R.J."/>
            <person name="Rosovitz M.J."/>
            <person name="Sullivan S.A."/>
            <person name="Daugherty S.C."/>
            <person name="Haft D.H."/>
            <person name="Selengut J."/>
            <person name="Gwinn M.L."/>
            <person name="Zhou L."/>
            <person name="Zafar N."/>
            <person name="Khouri H."/>
            <person name="Radune D."/>
            <person name="Dimitrov G."/>
            <person name="Watkins K."/>
            <person name="O'Connor K.J."/>
            <person name="Smith S."/>
            <person name="Utterback T.R."/>
            <person name="White O."/>
            <person name="Rubens C.E."/>
            <person name="Grandi G."/>
            <person name="Madoff L.C."/>
            <person name="Kasper D.L."/>
            <person name="Telford J.L."/>
            <person name="Wessels M.R."/>
            <person name="Rappuoli R."/>
            <person name="Fraser C.M."/>
        </authorList>
    </citation>
    <scope>NUCLEOTIDE SEQUENCE [LARGE SCALE GENOMIC DNA]</scope>
    <source>
        <strain>ATCC 27591 / A909 / CDC SS700</strain>
    </source>
</reference>
<gene>
    <name evidence="1" type="primary">guaA</name>
    <name type="ordered locus">SAK_1062</name>
</gene>
<organism>
    <name type="scientific">Streptococcus agalactiae serotype Ia (strain ATCC 27591 / A909 / CDC SS700)</name>
    <dbReference type="NCBI Taxonomy" id="205921"/>
    <lineage>
        <taxon>Bacteria</taxon>
        <taxon>Bacillati</taxon>
        <taxon>Bacillota</taxon>
        <taxon>Bacilli</taxon>
        <taxon>Lactobacillales</taxon>
        <taxon>Streptococcaceae</taxon>
        <taxon>Streptococcus</taxon>
    </lineage>
</organism>
<evidence type="ECO:0000255" key="1">
    <source>
        <dbReference type="HAMAP-Rule" id="MF_00344"/>
    </source>
</evidence>
<accession>Q3K1C0</accession>
<feature type="chain" id="PRO_0000229474" description="GMP synthase [glutamine-hydrolyzing]">
    <location>
        <begin position="1"/>
        <end position="520"/>
    </location>
</feature>
<feature type="domain" description="Glutamine amidotransferase type-1" evidence="1">
    <location>
        <begin position="12"/>
        <end position="205"/>
    </location>
</feature>
<feature type="domain" description="GMPS ATP-PPase" evidence="1">
    <location>
        <begin position="206"/>
        <end position="395"/>
    </location>
</feature>
<feature type="active site" description="Nucleophile" evidence="1">
    <location>
        <position position="89"/>
    </location>
</feature>
<feature type="active site" evidence="1">
    <location>
        <position position="179"/>
    </location>
</feature>
<feature type="active site" evidence="1">
    <location>
        <position position="181"/>
    </location>
</feature>
<feature type="binding site" evidence="1">
    <location>
        <begin position="233"/>
        <end position="239"/>
    </location>
    <ligand>
        <name>ATP</name>
        <dbReference type="ChEBI" id="CHEBI:30616"/>
    </ligand>
</feature>
<keyword id="KW-0067">ATP-binding</keyword>
<keyword id="KW-0315">Glutamine amidotransferase</keyword>
<keyword id="KW-0332">GMP biosynthesis</keyword>
<keyword id="KW-0436">Ligase</keyword>
<keyword id="KW-0547">Nucleotide-binding</keyword>
<keyword id="KW-0658">Purine biosynthesis</keyword>